<gene>
    <name evidence="1" type="primary">phnW</name>
    <name type="ordered locus">BURPS1106A_A0485</name>
</gene>
<dbReference type="EC" id="2.6.1.37" evidence="1"/>
<dbReference type="EMBL" id="CP000573">
    <property type="protein sequence ID" value="ABN94526.1"/>
    <property type="molecule type" value="Genomic_DNA"/>
</dbReference>
<dbReference type="RefSeq" id="WP_004536805.1">
    <property type="nucleotide sequence ID" value="NC_009078.1"/>
</dbReference>
<dbReference type="SMR" id="A3P2G7"/>
<dbReference type="KEGG" id="bpl:BURPS1106A_A0485"/>
<dbReference type="HOGENOM" id="CLU_027686_3_1_4"/>
<dbReference type="Proteomes" id="UP000006738">
    <property type="component" value="Chromosome II"/>
</dbReference>
<dbReference type="GO" id="GO:0047304">
    <property type="term" value="F:2-aminoethylphosphonate-pyruvate transaminase activity"/>
    <property type="evidence" value="ECO:0007669"/>
    <property type="project" value="UniProtKB-UniRule"/>
</dbReference>
<dbReference type="GO" id="GO:0019700">
    <property type="term" value="P:organic phosphonate catabolic process"/>
    <property type="evidence" value="ECO:0007669"/>
    <property type="project" value="InterPro"/>
</dbReference>
<dbReference type="Gene3D" id="3.90.1150.10">
    <property type="entry name" value="Aspartate Aminotransferase, domain 1"/>
    <property type="match status" value="1"/>
</dbReference>
<dbReference type="Gene3D" id="3.40.640.10">
    <property type="entry name" value="Type I PLP-dependent aspartate aminotransferase-like (Major domain)"/>
    <property type="match status" value="1"/>
</dbReference>
<dbReference type="HAMAP" id="MF_01376">
    <property type="entry name" value="PhnW_aminotrans_5"/>
    <property type="match status" value="1"/>
</dbReference>
<dbReference type="InterPro" id="IPR000192">
    <property type="entry name" value="Aminotrans_V_dom"/>
</dbReference>
<dbReference type="InterPro" id="IPR012703">
    <property type="entry name" value="NH2EtPonate_pyrv_transaminase"/>
</dbReference>
<dbReference type="InterPro" id="IPR015424">
    <property type="entry name" value="PyrdxlP-dep_Trfase"/>
</dbReference>
<dbReference type="InterPro" id="IPR015421">
    <property type="entry name" value="PyrdxlP-dep_Trfase_major"/>
</dbReference>
<dbReference type="InterPro" id="IPR015422">
    <property type="entry name" value="PyrdxlP-dep_Trfase_small"/>
</dbReference>
<dbReference type="InterPro" id="IPR024169">
    <property type="entry name" value="SP_NH2Trfase/AEP_transaminase"/>
</dbReference>
<dbReference type="NCBIfam" id="TIGR03301">
    <property type="entry name" value="PhnW-AepZ"/>
    <property type="match status" value="1"/>
</dbReference>
<dbReference type="NCBIfam" id="NF010006">
    <property type="entry name" value="PRK13479.1"/>
    <property type="match status" value="1"/>
</dbReference>
<dbReference type="NCBIfam" id="TIGR02326">
    <property type="entry name" value="transamin_PhnW"/>
    <property type="match status" value="1"/>
</dbReference>
<dbReference type="PANTHER" id="PTHR42778">
    <property type="entry name" value="2-AMINOETHYLPHOSPHONATE--PYRUVATE TRANSAMINASE"/>
    <property type="match status" value="1"/>
</dbReference>
<dbReference type="PANTHER" id="PTHR42778:SF1">
    <property type="entry name" value="2-AMINOETHYLPHOSPHONATE--PYRUVATE TRANSAMINASE"/>
    <property type="match status" value="1"/>
</dbReference>
<dbReference type="Pfam" id="PF00266">
    <property type="entry name" value="Aminotran_5"/>
    <property type="match status" value="1"/>
</dbReference>
<dbReference type="PIRSF" id="PIRSF000524">
    <property type="entry name" value="SPT"/>
    <property type="match status" value="1"/>
</dbReference>
<dbReference type="SUPFAM" id="SSF53383">
    <property type="entry name" value="PLP-dependent transferases"/>
    <property type="match status" value="1"/>
</dbReference>
<organism>
    <name type="scientific">Burkholderia pseudomallei (strain 1106a)</name>
    <dbReference type="NCBI Taxonomy" id="357348"/>
    <lineage>
        <taxon>Bacteria</taxon>
        <taxon>Pseudomonadati</taxon>
        <taxon>Pseudomonadota</taxon>
        <taxon>Betaproteobacteria</taxon>
        <taxon>Burkholderiales</taxon>
        <taxon>Burkholderiaceae</taxon>
        <taxon>Burkholderia</taxon>
        <taxon>pseudomallei group</taxon>
    </lineage>
</organism>
<feature type="chain" id="PRO_1000068246" description="2-aminoethylphosphonate--pyruvate transaminase">
    <location>
        <begin position="1"/>
        <end position="369"/>
    </location>
</feature>
<feature type="modified residue" description="N6-(pyridoxal phosphate)lysine" evidence="1">
    <location>
        <position position="193"/>
    </location>
</feature>
<accession>A3P2G7</accession>
<name>PHNW_BURP0</name>
<comment type="function">
    <text evidence="1">Involved in phosphonate degradation.</text>
</comment>
<comment type="catalytic activity">
    <reaction evidence="1">
        <text>(2-aminoethyl)phosphonate + pyruvate = phosphonoacetaldehyde + L-alanine</text>
        <dbReference type="Rhea" id="RHEA:17021"/>
        <dbReference type="ChEBI" id="CHEBI:15361"/>
        <dbReference type="ChEBI" id="CHEBI:57418"/>
        <dbReference type="ChEBI" id="CHEBI:57972"/>
        <dbReference type="ChEBI" id="CHEBI:58383"/>
        <dbReference type="EC" id="2.6.1.37"/>
    </reaction>
</comment>
<comment type="cofactor">
    <cofactor evidence="1">
        <name>pyridoxal 5'-phosphate</name>
        <dbReference type="ChEBI" id="CHEBI:597326"/>
    </cofactor>
</comment>
<comment type="subunit">
    <text evidence="1">Homodimer.</text>
</comment>
<comment type="similarity">
    <text evidence="1">Belongs to the class-V pyridoxal-phosphate-dependent aminotransferase family. PhnW subfamily.</text>
</comment>
<reference key="1">
    <citation type="journal article" date="2010" name="Genome Biol. Evol.">
        <title>Continuing evolution of Burkholderia mallei through genome reduction and large-scale rearrangements.</title>
        <authorList>
            <person name="Losada L."/>
            <person name="Ronning C.M."/>
            <person name="DeShazer D."/>
            <person name="Woods D."/>
            <person name="Fedorova N."/>
            <person name="Kim H.S."/>
            <person name="Shabalina S.A."/>
            <person name="Pearson T.R."/>
            <person name="Brinkac L."/>
            <person name="Tan P."/>
            <person name="Nandi T."/>
            <person name="Crabtree J."/>
            <person name="Badger J."/>
            <person name="Beckstrom-Sternberg S."/>
            <person name="Saqib M."/>
            <person name="Schutzer S.E."/>
            <person name="Keim P."/>
            <person name="Nierman W.C."/>
        </authorList>
    </citation>
    <scope>NUCLEOTIDE SEQUENCE [LARGE SCALE GENOMIC DNA]</scope>
    <source>
        <strain>1106a</strain>
    </source>
</reference>
<sequence>MPERDPILLTPGPLTTSRMTRDAMLRDWGSWDAAFNRLTKSVCADLVRIAGGGDAYVCVPLQGSGTFAVEATLGTLVPRDARVLVPNNGAYCARIAAILRRLGIAHVELPFAEDEPASAHAIDAALARDARLTHVALVHLETSAGLLNPLDDIAAVCRARGKALIVDAMSSFGALPIALAASGIDALISASGKCLEGVPGMGFAIVRRSALEAAEGRSPSVALDLHDQYAYMQRTSQWRFTPPTHVLAALRAALDQFFDEGGQPARGARYARNCATLVDGMRALGFEPFLDARAQASVIVTFYAPADPAYAFPAFYAAVRDAGYVLYPGKLTTADTFRVGCIGALGADEMRGAVAAIGGALESLGIAMR</sequence>
<evidence type="ECO:0000255" key="1">
    <source>
        <dbReference type="HAMAP-Rule" id="MF_01376"/>
    </source>
</evidence>
<protein>
    <recommendedName>
        <fullName evidence="1">2-aminoethylphosphonate--pyruvate transaminase</fullName>
        <ecNumber evidence="1">2.6.1.37</ecNumber>
    </recommendedName>
    <alternativeName>
        <fullName evidence="1">2-aminoethylphosphonate aminotransferase</fullName>
    </alternativeName>
    <alternativeName>
        <fullName evidence="1">AEP transaminase</fullName>
        <shortName evidence="1">AEPT</shortName>
    </alternativeName>
</protein>
<keyword id="KW-0032">Aminotransferase</keyword>
<keyword id="KW-0663">Pyridoxal phosphate</keyword>
<keyword id="KW-0670">Pyruvate</keyword>
<keyword id="KW-0808">Transferase</keyword>
<proteinExistence type="inferred from homology"/>